<name>ESRP2_HUMAN</name>
<feature type="chain" id="PRO_0000273050" description="Epithelial splicing regulatory protein 2">
    <location>
        <begin position="1"/>
        <end position="727"/>
    </location>
</feature>
<feature type="domain" description="RRM 1">
    <location>
        <begin position="257"/>
        <end position="353"/>
    </location>
</feature>
<feature type="domain" description="RRM 2">
    <location>
        <begin position="358"/>
        <end position="438"/>
    </location>
</feature>
<feature type="domain" description="RRM 3">
    <location>
        <begin position="475"/>
        <end position="555"/>
    </location>
</feature>
<feature type="region of interest" description="Disordered" evidence="2">
    <location>
        <begin position="1"/>
        <end position="22"/>
    </location>
</feature>
<feature type="modified residue" description="Phosphoserine" evidence="1">
    <location>
        <position position="83"/>
    </location>
</feature>
<feature type="modified residue" description="Phosphoserine" evidence="7">
    <location>
        <position position="573"/>
    </location>
</feature>
<feature type="splice variant" id="VSP_022474" description="In isoform 2." evidence="5">
    <location>
        <begin position="238"/>
        <end position="247"/>
    </location>
</feature>
<feature type="sequence variant" id="VAR_030074" description="In dbSNP:rs12597504.">
    <original>S</original>
    <variation>L</variation>
    <location>
        <position position="111"/>
    </location>
</feature>
<feature type="sequence variant" id="VAR_030075" description="In dbSNP:rs3743738.">
    <original>A</original>
    <variation>V</variation>
    <location>
        <position position="528"/>
    </location>
</feature>
<feature type="sequence variant" id="VAR_057245" description="In dbSNP:rs36054935.">
    <original>P</original>
    <variation>S</variation>
    <location>
        <position position="627"/>
    </location>
</feature>
<feature type="sequence conflict" description="In Ref. 1; BAB15275." evidence="6" ref="1">
    <original>T</original>
    <variation>I</variation>
    <location>
        <position position="586"/>
    </location>
</feature>
<organism>
    <name type="scientific">Homo sapiens</name>
    <name type="common">Human</name>
    <dbReference type="NCBI Taxonomy" id="9606"/>
    <lineage>
        <taxon>Eukaryota</taxon>
        <taxon>Metazoa</taxon>
        <taxon>Chordata</taxon>
        <taxon>Craniata</taxon>
        <taxon>Vertebrata</taxon>
        <taxon>Euteleostomi</taxon>
        <taxon>Mammalia</taxon>
        <taxon>Eutheria</taxon>
        <taxon>Euarchontoglires</taxon>
        <taxon>Primates</taxon>
        <taxon>Haplorrhini</taxon>
        <taxon>Catarrhini</taxon>
        <taxon>Hominidae</taxon>
        <taxon>Homo</taxon>
    </lineage>
</organism>
<evidence type="ECO:0000250" key="1">
    <source>
        <dbReference type="UniProtKB" id="Q8K0G8"/>
    </source>
</evidence>
<evidence type="ECO:0000256" key="2">
    <source>
        <dbReference type="SAM" id="MobiDB-lite"/>
    </source>
</evidence>
<evidence type="ECO:0000269" key="3">
    <source>
    </source>
</evidence>
<evidence type="ECO:0000269" key="4">
    <source>
    </source>
</evidence>
<evidence type="ECO:0000303" key="5">
    <source>
    </source>
</evidence>
<evidence type="ECO:0000305" key="6"/>
<evidence type="ECO:0007744" key="7">
    <source>
    </source>
</evidence>
<accession>Q9H6T0</accession>
<accession>Q8N6H8</accession>
<accession>Q8WZ15</accession>
<accession>Q9H6I4</accession>
<proteinExistence type="evidence at protein level"/>
<protein>
    <recommendedName>
        <fullName>Epithelial splicing regulatory protein 2</fullName>
    </recommendedName>
    <alternativeName>
        <fullName>RNA-binding motif protein 35B</fullName>
    </alternativeName>
    <alternativeName>
        <fullName>RNA-binding protein 35B</fullName>
    </alternativeName>
</protein>
<keyword id="KW-0025">Alternative splicing</keyword>
<keyword id="KW-0507">mRNA processing</keyword>
<keyword id="KW-0508">mRNA splicing</keyword>
<keyword id="KW-0539">Nucleus</keyword>
<keyword id="KW-0597">Phosphoprotein</keyword>
<keyword id="KW-1267">Proteomics identification</keyword>
<keyword id="KW-1185">Reference proteome</keyword>
<keyword id="KW-0677">Repeat</keyword>
<keyword id="KW-0694">RNA-binding</keyword>
<dbReference type="EMBL" id="AK025571">
    <property type="protein sequence ID" value="BAB15173.1"/>
    <property type="molecule type" value="mRNA"/>
</dbReference>
<dbReference type="EMBL" id="AK025901">
    <property type="protein sequence ID" value="BAB15275.1"/>
    <property type="status" value="ALT_INIT"/>
    <property type="molecule type" value="mRNA"/>
</dbReference>
<dbReference type="EMBL" id="BC030146">
    <property type="protein sequence ID" value="AAH30146.1"/>
    <property type="molecule type" value="mRNA"/>
</dbReference>
<dbReference type="EMBL" id="AF289577">
    <property type="protein sequence ID" value="AAL55761.1"/>
    <property type="status" value="ALT_FRAME"/>
    <property type="molecule type" value="mRNA"/>
</dbReference>
<dbReference type="CCDS" id="CCDS10863.1">
    <molecule id="Q9H6T0-2"/>
</dbReference>
<dbReference type="CCDS" id="CCDS92181.1">
    <molecule id="Q9H6T0-1"/>
</dbReference>
<dbReference type="RefSeq" id="NP_001352193.1">
    <molecule id="Q9H6T0-1"/>
    <property type="nucleotide sequence ID" value="NM_001365264.1"/>
</dbReference>
<dbReference type="RefSeq" id="NP_079215.2">
    <molecule id="Q9H6T0-2"/>
    <property type="nucleotide sequence ID" value="NM_024939.2"/>
</dbReference>
<dbReference type="SMR" id="Q9H6T0"/>
<dbReference type="BioGRID" id="123061">
    <property type="interactions" value="95"/>
</dbReference>
<dbReference type="FunCoup" id="Q9H6T0">
    <property type="interactions" value="619"/>
</dbReference>
<dbReference type="IntAct" id="Q9H6T0">
    <property type="interactions" value="50"/>
</dbReference>
<dbReference type="MINT" id="Q9H6T0"/>
<dbReference type="STRING" id="9606.ENSP00000418748"/>
<dbReference type="GlyGen" id="Q9H6T0">
    <property type="glycosylation" value="2 sites"/>
</dbReference>
<dbReference type="iPTMnet" id="Q9H6T0"/>
<dbReference type="PhosphoSitePlus" id="Q9H6T0"/>
<dbReference type="SwissPalm" id="Q9H6T0"/>
<dbReference type="BioMuta" id="ESRP2"/>
<dbReference type="DMDM" id="74761482"/>
<dbReference type="jPOST" id="Q9H6T0"/>
<dbReference type="MassIVE" id="Q9H6T0"/>
<dbReference type="PaxDb" id="9606-ENSP00000418748"/>
<dbReference type="PeptideAtlas" id="Q9H6T0"/>
<dbReference type="ProteomicsDB" id="81030">
    <molecule id="Q9H6T0-1"/>
</dbReference>
<dbReference type="ProteomicsDB" id="81031">
    <molecule id="Q9H6T0-2"/>
</dbReference>
<dbReference type="Pumba" id="Q9H6T0"/>
<dbReference type="Antibodypedia" id="29741">
    <property type="antibodies" value="197 antibodies from 30 providers"/>
</dbReference>
<dbReference type="DNASU" id="80004"/>
<dbReference type="Ensembl" id="ENST00000473183.7">
    <molecule id="Q9H6T0-2"/>
    <property type="protein sequence ID" value="ENSP00000418748.2"/>
    <property type="gene ID" value="ENSG00000103067.14"/>
</dbReference>
<dbReference type="Ensembl" id="ENST00000565858.5">
    <molecule id="Q9H6T0-1"/>
    <property type="protein sequence ID" value="ENSP00000454554.1"/>
    <property type="gene ID" value="ENSG00000103067.14"/>
</dbReference>
<dbReference type="GeneID" id="80004"/>
<dbReference type="KEGG" id="hsa:80004"/>
<dbReference type="MANE-Select" id="ENST00000473183.7">
    <molecule id="Q9H6T0-2"/>
    <property type="protein sequence ID" value="ENSP00000418748.2"/>
    <property type="RefSeq nucleotide sequence ID" value="NM_024939.3"/>
    <property type="RefSeq protein sequence ID" value="NP_079215.2"/>
</dbReference>
<dbReference type="UCSC" id="uc002evq.2">
    <molecule id="Q9H6T0-1"/>
    <property type="organism name" value="human"/>
</dbReference>
<dbReference type="AGR" id="HGNC:26152"/>
<dbReference type="CTD" id="80004"/>
<dbReference type="DisGeNET" id="80004"/>
<dbReference type="GeneCards" id="ESRP2"/>
<dbReference type="HGNC" id="HGNC:26152">
    <property type="gene designation" value="ESRP2"/>
</dbReference>
<dbReference type="HPA" id="ENSG00000103067">
    <property type="expression patterns" value="Tissue enhanced (esophagus)"/>
</dbReference>
<dbReference type="MIM" id="612960">
    <property type="type" value="gene"/>
</dbReference>
<dbReference type="neXtProt" id="NX_Q9H6T0"/>
<dbReference type="OpenTargets" id="ENSG00000103067"/>
<dbReference type="PharmGKB" id="PA164719361"/>
<dbReference type="VEuPathDB" id="HostDB:ENSG00000103067"/>
<dbReference type="eggNOG" id="KOG1365">
    <property type="taxonomic scope" value="Eukaryota"/>
</dbReference>
<dbReference type="GeneTree" id="ENSGT00940000157187"/>
<dbReference type="HOGENOM" id="CLU_008009_2_1_1"/>
<dbReference type="InParanoid" id="Q9H6T0"/>
<dbReference type="OMA" id="VQHPSAC"/>
<dbReference type="OrthoDB" id="431068at2759"/>
<dbReference type="PAN-GO" id="Q9H6T0">
    <property type="GO annotations" value="4 GO annotations based on evolutionary models"/>
</dbReference>
<dbReference type="PhylomeDB" id="Q9H6T0"/>
<dbReference type="TreeFam" id="TF316157"/>
<dbReference type="PathwayCommons" id="Q9H6T0"/>
<dbReference type="Reactome" id="R-HSA-6803529">
    <property type="pathway name" value="FGFR2 alternative splicing"/>
</dbReference>
<dbReference type="SignaLink" id="Q9H6T0"/>
<dbReference type="BioGRID-ORCS" id="80004">
    <property type="hits" value="13 hits in 1152 CRISPR screens"/>
</dbReference>
<dbReference type="ChiTaRS" id="ESRP2">
    <property type="organism name" value="human"/>
</dbReference>
<dbReference type="GenomeRNAi" id="80004"/>
<dbReference type="Pharos" id="Q9H6T0">
    <property type="development level" value="Tbio"/>
</dbReference>
<dbReference type="PRO" id="PR:Q9H6T0"/>
<dbReference type="Proteomes" id="UP000005640">
    <property type="component" value="Chromosome 16"/>
</dbReference>
<dbReference type="RNAct" id="Q9H6T0">
    <property type="molecule type" value="protein"/>
</dbReference>
<dbReference type="Bgee" id="ENSG00000103067">
    <property type="expression patterns" value="Expressed in lower esophagus mucosa and 103 other cell types or tissues"/>
</dbReference>
<dbReference type="ExpressionAtlas" id="Q9H6T0">
    <property type="expression patterns" value="baseline and differential"/>
</dbReference>
<dbReference type="GO" id="GO:0005654">
    <property type="term" value="C:nucleoplasm"/>
    <property type="evidence" value="ECO:0000314"/>
    <property type="project" value="HPA"/>
</dbReference>
<dbReference type="GO" id="GO:0005634">
    <property type="term" value="C:nucleus"/>
    <property type="evidence" value="ECO:0000314"/>
    <property type="project" value="UniProtKB"/>
</dbReference>
<dbReference type="GO" id="GO:1990904">
    <property type="term" value="C:ribonucleoprotein complex"/>
    <property type="evidence" value="ECO:0000318"/>
    <property type="project" value="GO_Central"/>
</dbReference>
<dbReference type="GO" id="GO:0003729">
    <property type="term" value="F:mRNA binding"/>
    <property type="evidence" value="ECO:0000314"/>
    <property type="project" value="UniProtKB"/>
</dbReference>
<dbReference type="GO" id="GO:0003723">
    <property type="term" value="F:RNA binding"/>
    <property type="evidence" value="ECO:0007005"/>
    <property type="project" value="UniProtKB"/>
</dbReference>
<dbReference type="GO" id="GO:0000380">
    <property type="term" value="P:alternative mRNA splicing, via spliceosome"/>
    <property type="evidence" value="ECO:0007669"/>
    <property type="project" value="Ensembl"/>
</dbReference>
<dbReference type="GO" id="GO:0060445">
    <property type="term" value="P:branching involved in salivary gland morphogenesis"/>
    <property type="evidence" value="ECO:0007669"/>
    <property type="project" value="Ensembl"/>
</dbReference>
<dbReference type="GO" id="GO:0050673">
    <property type="term" value="P:epithelial cell proliferation"/>
    <property type="evidence" value="ECO:0007669"/>
    <property type="project" value="Ensembl"/>
</dbReference>
<dbReference type="GO" id="GO:0060441">
    <property type="term" value="P:epithelial tube branching involved in lung morphogenesis"/>
    <property type="evidence" value="ECO:0007669"/>
    <property type="project" value="Ensembl"/>
</dbReference>
<dbReference type="GO" id="GO:0050679">
    <property type="term" value="P:positive regulation of epithelial cell proliferation"/>
    <property type="evidence" value="ECO:0007669"/>
    <property type="project" value="Ensembl"/>
</dbReference>
<dbReference type="GO" id="GO:0043484">
    <property type="term" value="P:regulation of RNA splicing"/>
    <property type="evidence" value="ECO:0000314"/>
    <property type="project" value="UniProtKB"/>
</dbReference>
<dbReference type="CDD" id="cd12742">
    <property type="entry name" value="RRM3_ESRP1_ESRP2"/>
    <property type="match status" value="1"/>
</dbReference>
<dbReference type="FunFam" id="3.30.70.330:FF:000041">
    <property type="entry name" value="Epithelial splicing regulatory protein 1"/>
    <property type="match status" value="1"/>
</dbReference>
<dbReference type="FunFam" id="3.30.70.330:FF:000070">
    <property type="entry name" value="Epithelial splicing regulatory protein 1"/>
    <property type="match status" value="1"/>
</dbReference>
<dbReference type="FunFam" id="3.30.70.330:FF:000056">
    <property type="entry name" value="epithelial splicing regulatory protein 1 isoform X1"/>
    <property type="match status" value="1"/>
</dbReference>
<dbReference type="FunFam" id="3.30.420.10:FF:000037">
    <property type="entry name" value="epithelial splicing regulatory protein 2 isoform X1"/>
    <property type="match status" value="1"/>
</dbReference>
<dbReference type="Gene3D" id="3.30.70.330">
    <property type="match status" value="3"/>
</dbReference>
<dbReference type="Gene3D" id="3.30.420.10">
    <property type="entry name" value="Ribonuclease H-like superfamily/Ribonuclease H"/>
    <property type="match status" value="1"/>
</dbReference>
<dbReference type="InterPro" id="IPR050666">
    <property type="entry name" value="ESRP"/>
</dbReference>
<dbReference type="InterPro" id="IPR012677">
    <property type="entry name" value="Nucleotide-bd_a/b_plait_sf"/>
</dbReference>
<dbReference type="InterPro" id="IPR035979">
    <property type="entry name" value="RBD_domain_sf"/>
</dbReference>
<dbReference type="InterPro" id="IPR012337">
    <property type="entry name" value="RNaseH-like_sf"/>
</dbReference>
<dbReference type="InterPro" id="IPR036397">
    <property type="entry name" value="RNaseH_sf"/>
</dbReference>
<dbReference type="InterPro" id="IPR000504">
    <property type="entry name" value="RRM_dom"/>
</dbReference>
<dbReference type="PANTHER" id="PTHR13976">
    <property type="entry name" value="HETEROGENEOUS NUCLEAR RIBONUCLEOPROTEIN-RELATED"/>
    <property type="match status" value="1"/>
</dbReference>
<dbReference type="SMART" id="SM00360">
    <property type="entry name" value="RRM"/>
    <property type="match status" value="3"/>
</dbReference>
<dbReference type="SUPFAM" id="SSF53098">
    <property type="entry name" value="Ribonuclease H-like"/>
    <property type="match status" value="1"/>
</dbReference>
<dbReference type="SUPFAM" id="SSF54928">
    <property type="entry name" value="RNA-binding domain, RBD"/>
    <property type="match status" value="3"/>
</dbReference>
<gene>
    <name type="primary">ESRP2</name>
    <name type="synonym">RBM35B</name>
    <name type="ORF">PP7059</name>
</gene>
<comment type="function">
    <text evidence="3">mRNA splicing factor that regulates the formation of epithelial cell-specific isoforms. Specifically regulates the expression of FGFR2-IIIb, an epithelial cell-specific isoform of FGFR2. Also regulates the splicing of CD44, CTNND1, ENAH, 3 transcripts that undergo changes in splicing during the epithelial-to-mesenchymal transition (EMT). Acts by directly binding specific sequences in mRNAs. Binds the GU-rich sequence motifs in the ISE/ISS-3, a cis-element regulatory region present in the mRNA of FGFR2.</text>
</comment>
<comment type="subunit">
    <text evidence="4">Interacts with RBPMS.</text>
</comment>
<comment type="interaction">
    <interactant intactId="EBI-3941182">
        <id>Q9H6T0</id>
    </interactant>
    <interactant intactId="EBI-351896">
        <id>P11142</id>
        <label>HSPA8</label>
    </interactant>
    <organismsDiffer>false</organismsDiffer>
    <experiments>2</experiments>
</comment>
<comment type="subcellular location">
    <subcellularLocation>
        <location evidence="3">Nucleus</location>
    </subcellularLocation>
</comment>
<comment type="alternative products">
    <event type="alternative splicing"/>
    <isoform>
        <id>Q9H6T0-1</id>
        <name>1</name>
        <sequence type="displayed"/>
    </isoform>
    <isoform>
        <id>Q9H6T0-2</id>
        <name>2</name>
        <sequence type="described" ref="VSP_022474"/>
    </isoform>
</comment>
<comment type="tissue specificity">
    <text evidence="3">Epithelial cell-specific.</text>
</comment>
<comment type="induction">
    <text evidence="3">Down-regulated during the epithelial-to-mesenchymal transition (EMT).</text>
</comment>
<comment type="similarity">
    <text evidence="6">Belongs to the ESRP family.</text>
</comment>
<comment type="sequence caution" evidence="6">
    <conflict type="frameshift">
        <sequence resource="EMBL-CDS" id="AAL55761"/>
    </conflict>
</comment>
<comment type="sequence caution" evidence="6">
    <conflict type="erroneous initiation">
        <sequence resource="EMBL-CDS" id="BAB15275"/>
    </conflict>
</comment>
<reference key="1">
    <citation type="journal article" date="2004" name="Nat. Genet.">
        <title>Complete sequencing and characterization of 21,243 full-length human cDNAs.</title>
        <authorList>
            <person name="Ota T."/>
            <person name="Suzuki Y."/>
            <person name="Nishikawa T."/>
            <person name="Otsuki T."/>
            <person name="Sugiyama T."/>
            <person name="Irie R."/>
            <person name="Wakamatsu A."/>
            <person name="Hayashi K."/>
            <person name="Sato H."/>
            <person name="Nagai K."/>
            <person name="Kimura K."/>
            <person name="Makita H."/>
            <person name="Sekine M."/>
            <person name="Obayashi M."/>
            <person name="Nishi T."/>
            <person name="Shibahara T."/>
            <person name="Tanaka T."/>
            <person name="Ishii S."/>
            <person name="Yamamoto J."/>
            <person name="Saito K."/>
            <person name="Kawai Y."/>
            <person name="Isono Y."/>
            <person name="Nakamura Y."/>
            <person name="Nagahari K."/>
            <person name="Murakami K."/>
            <person name="Yasuda T."/>
            <person name="Iwayanagi T."/>
            <person name="Wagatsuma M."/>
            <person name="Shiratori A."/>
            <person name="Sudo H."/>
            <person name="Hosoiri T."/>
            <person name="Kaku Y."/>
            <person name="Kodaira H."/>
            <person name="Kondo H."/>
            <person name="Sugawara M."/>
            <person name="Takahashi M."/>
            <person name="Kanda K."/>
            <person name="Yokoi T."/>
            <person name="Furuya T."/>
            <person name="Kikkawa E."/>
            <person name="Omura Y."/>
            <person name="Abe K."/>
            <person name="Kamihara K."/>
            <person name="Katsuta N."/>
            <person name="Sato K."/>
            <person name="Tanikawa M."/>
            <person name="Yamazaki M."/>
            <person name="Ninomiya K."/>
            <person name="Ishibashi T."/>
            <person name="Yamashita H."/>
            <person name="Murakawa K."/>
            <person name="Fujimori K."/>
            <person name="Tanai H."/>
            <person name="Kimata M."/>
            <person name="Watanabe M."/>
            <person name="Hiraoka S."/>
            <person name="Chiba Y."/>
            <person name="Ishida S."/>
            <person name="Ono Y."/>
            <person name="Takiguchi S."/>
            <person name="Watanabe S."/>
            <person name="Yosida M."/>
            <person name="Hotuta T."/>
            <person name="Kusano J."/>
            <person name="Kanehori K."/>
            <person name="Takahashi-Fujii A."/>
            <person name="Hara H."/>
            <person name="Tanase T.-O."/>
            <person name="Nomura Y."/>
            <person name="Togiya S."/>
            <person name="Komai F."/>
            <person name="Hara R."/>
            <person name="Takeuchi K."/>
            <person name="Arita M."/>
            <person name="Imose N."/>
            <person name="Musashino K."/>
            <person name="Yuuki H."/>
            <person name="Oshima A."/>
            <person name="Sasaki N."/>
            <person name="Aotsuka S."/>
            <person name="Yoshikawa Y."/>
            <person name="Matsunawa H."/>
            <person name="Ichihara T."/>
            <person name="Shiohata N."/>
            <person name="Sano S."/>
            <person name="Moriya S."/>
            <person name="Momiyama H."/>
            <person name="Satoh N."/>
            <person name="Takami S."/>
            <person name="Terashima Y."/>
            <person name="Suzuki O."/>
            <person name="Nakagawa S."/>
            <person name="Senoh A."/>
            <person name="Mizoguchi H."/>
            <person name="Goto Y."/>
            <person name="Shimizu F."/>
            <person name="Wakebe H."/>
            <person name="Hishigaki H."/>
            <person name="Watanabe T."/>
            <person name="Sugiyama A."/>
            <person name="Takemoto M."/>
            <person name="Kawakami B."/>
            <person name="Yamazaki M."/>
            <person name="Watanabe K."/>
            <person name="Kumagai A."/>
            <person name="Itakura S."/>
            <person name="Fukuzumi Y."/>
            <person name="Fujimori Y."/>
            <person name="Komiyama M."/>
            <person name="Tashiro H."/>
            <person name="Tanigami A."/>
            <person name="Fujiwara T."/>
            <person name="Ono T."/>
            <person name="Yamada K."/>
            <person name="Fujii Y."/>
            <person name="Ozaki K."/>
            <person name="Hirao M."/>
            <person name="Ohmori Y."/>
            <person name="Kawabata A."/>
            <person name="Hikiji T."/>
            <person name="Kobatake N."/>
            <person name="Inagaki H."/>
            <person name="Ikema Y."/>
            <person name="Okamoto S."/>
            <person name="Okitani R."/>
            <person name="Kawakami T."/>
            <person name="Noguchi S."/>
            <person name="Itoh T."/>
            <person name="Shigeta K."/>
            <person name="Senba T."/>
            <person name="Matsumura K."/>
            <person name="Nakajima Y."/>
            <person name="Mizuno T."/>
            <person name="Morinaga M."/>
            <person name="Sasaki M."/>
            <person name="Togashi T."/>
            <person name="Oyama M."/>
            <person name="Hata H."/>
            <person name="Watanabe M."/>
            <person name="Komatsu T."/>
            <person name="Mizushima-Sugano J."/>
            <person name="Satoh T."/>
            <person name="Shirai Y."/>
            <person name="Takahashi Y."/>
            <person name="Nakagawa K."/>
            <person name="Okumura K."/>
            <person name="Nagase T."/>
            <person name="Nomura N."/>
            <person name="Kikuchi H."/>
            <person name="Masuho Y."/>
            <person name="Yamashita R."/>
            <person name="Nakai K."/>
            <person name="Yada T."/>
            <person name="Nakamura Y."/>
            <person name="Ohara O."/>
            <person name="Isogai T."/>
            <person name="Sugano S."/>
        </authorList>
    </citation>
    <scope>NUCLEOTIDE SEQUENCE [LARGE SCALE MRNA] (ISOFORM 1)</scope>
    <source>
        <tissue>Hepatoma</tissue>
    </source>
</reference>
<reference key="2">
    <citation type="journal article" date="2004" name="Genome Res.">
        <title>The status, quality, and expansion of the NIH full-length cDNA project: the Mammalian Gene Collection (MGC).</title>
        <authorList>
            <consortium name="The MGC Project Team"/>
        </authorList>
    </citation>
    <scope>NUCLEOTIDE SEQUENCE [LARGE SCALE MRNA] (ISOFORM 2)</scope>
    <source>
        <tissue>Placenta</tissue>
    </source>
</reference>
<reference key="3">
    <citation type="journal article" date="2004" name="Proc. Natl. Acad. Sci. U.S.A.">
        <title>Large-scale cDNA transfection screening for genes related to cancer development and progression.</title>
        <authorList>
            <person name="Wan D."/>
            <person name="Gong Y."/>
            <person name="Qin W."/>
            <person name="Zhang P."/>
            <person name="Li J."/>
            <person name="Wei L."/>
            <person name="Zhou X."/>
            <person name="Li H."/>
            <person name="Qiu X."/>
            <person name="Zhong F."/>
            <person name="He L."/>
            <person name="Yu J."/>
            <person name="Yao G."/>
            <person name="Jiang H."/>
            <person name="Qian L."/>
            <person name="Yu Y."/>
            <person name="Shu H."/>
            <person name="Chen X."/>
            <person name="Xu H."/>
            <person name="Guo M."/>
            <person name="Pan Z."/>
            <person name="Chen Y."/>
            <person name="Ge C."/>
            <person name="Yang S."/>
            <person name="Gu J."/>
        </authorList>
    </citation>
    <scope>NUCLEOTIDE SEQUENCE [LARGE SCALE MRNA] OF 248-727</scope>
</reference>
<reference key="4">
    <citation type="journal article" date="2009" name="Mol. Cell">
        <title>ESRP1 and ESRP2 are epithelial cell-type-specific regulators of FGFR2 splicing.</title>
        <authorList>
            <person name="Warzecha C.C."/>
            <person name="Sato T.K."/>
            <person name="Nabet B."/>
            <person name="Hogenesch J.B."/>
            <person name="Carstens R.P."/>
        </authorList>
    </citation>
    <scope>FUNCTION</scope>
    <scope>SUBCELLULAR LOCATION</scope>
    <scope>RNA-BINDING</scope>
    <scope>TISSUE SPECIFICITY</scope>
    <scope>INDUCTION</scope>
</reference>
<reference key="5">
    <citation type="journal article" date="2010" name="Sci. Signal.">
        <title>Quantitative phosphoproteomics reveals widespread full phosphorylation site occupancy during mitosis.</title>
        <authorList>
            <person name="Olsen J.V."/>
            <person name="Vermeulen M."/>
            <person name="Santamaria A."/>
            <person name="Kumar C."/>
            <person name="Miller M.L."/>
            <person name="Jensen L.J."/>
            <person name="Gnad F."/>
            <person name="Cox J."/>
            <person name="Jensen T.S."/>
            <person name="Nigg E.A."/>
            <person name="Brunak S."/>
            <person name="Mann M."/>
        </authorList>
    </citation>
    <scope>IDENTIFICATION BY MASS SPECTROMETRY [LARGE SCALE ANALYSIS]</scope>
    <source>
        <tissue>Cervix carcinoma</tissue>
    </source>
</reference>
<reference key="6">
    <citation type="journal article" date="2011" name="BMC Syst. Biol.">
        <title>Initial characterization of the human central proteome.</title>
        <authorList>
            <person name="Burkard T.R."/>
            <person name="Planyavsky M."/>
            <person name="Kaupe I."/>
            <person name="Breitwieser F.P."/>
            <person name="Buerckstuemmer T."/>
            <person name="Bennett K.L."/>
            <person name="Superti-Furga G."/>
            <person name="Colinge J."/>
        </authorList>
    </citation>
    <scope>IDENTIFICATION BY MASS SPECTROMETRY [LARGE SCALE ANALYSIS]</scope>
</reference>
<reference key="7">
    <citation type="journal article" date="2014" name="J. Proteomics">
        <title>An enzyme assisted RP-RPLC approach for in-depth analysis of human liver phosphoproteome.</title>
        <authorList>
            <person name="Bian Y."/>
            <person name="Song C."/>
            <person name="Cheng K."/>
            <person name="Dong M."/>
            <person name="Wang F."/>
            <person name="Huang J."/>
            <person name="Sun D."/>
            <person name="Wang L."/>
            <person name="Ye M."/>
            <person name="Zou H."/>
        </authorList>
    </citation>
    <scope>PHOSPHORYLATION [LARGE SCALE ANALYSIS] AT SER-573</scope>
    <scope>IDENTIFICATION BY MASS SPECTROMETRY [LARGE SCALE ANALYSIS]</scope>
    <source>
        <tissue>Liver</tissue>
    </source>
</reference>
<reference key="8">
    <citation type="journal article" date="2023" name="Nucleic Acids Res.">
        <title>Cell-type specific regulator RBPMS switches alternative splicing via higher-order oligomerization and heterotypic interactions with other splicing regulators.</title>
        <authorList>
            <person name="Yang Y."/>
            <person name="Lee G.C."/>
            <person name="Nakagaki-Silva E."/>
            <person name="Huang Y."/>
            <person name="Peacey M."/>
            <person name="Partridge R."/>
            <person name="Gooding C."/>
            <person name="Smith C.W.J."/>
        </authorList>
    </citation>
    <scope>INTERACTION WITH RBPMS</scope>
</reference>
<sequence length="727" mass="78401">MTPPPPPPPPPGPDPAADPAADPCPWPGSLVVLFGATAGALGRDLGSDETDLILLVWQVVEPRSRQVGTLHKSLVRAEAAALSTQCREASGLSADSLARAEPLDKVLQQFSQLVNGDVALLGGGPYMLCTDGQQLLRQVLHPEASRKNLVLPDMFFSFYDLRREFHMQHPSTCPARDLTVATMAQGLGLETDATEDDFGVWEVKTMVAVILHLLKEPSSQLFSKPEVIKQKYETGPCSDSTVPCPYSSKADVVDSETVVRARGLPWQSSDQDVARFFKGLNVARGGVALCLNAQGRRNGEALIRFVDSEQRDLALQRHKHHMGVRYIEVYKATGEEFVKIAGGTSLEVARFLSREDQVILRLRGLPFSAGPTDVLGFLGPECPVTGGTEGLLFVRHPDGRPTGDAFALFACEELAQAALRRHKGMLGKRYIELFRSTAAEVQQVLNRYASGPLLPTLTAPLLPIPFPLAPGTGRDCVRLRGLPYTATIEDILSFLGEAAADIRPHGVHMVLNQQGRPSGDAFIQMTSAERALAAAQRCHKKVMKERYVEVVPCSTEEMSRVLMGGTLGRSGMSPPPCKLPCLSPPTYTTFQATPTLIPTETAALYPSSALLPAARVPAAPTPVAYYPGPATQLYLNYTAYYPSPPVSPTTVGYLTTPTAALASAPTSVLSQSGALVRMQGVPYTAGMKDLLSVFQAYQLPADDYTSLMPVGDPPRTVLQAPKEWVCL</sequence>